<comment type="function">
    <text evidence="1">Catalyzes the decarboxylation of four acetate groups of uroporphyrinogen-III to yield coproporphyrinogen-III.</text>
</comment>
<comment type="catalytic activity">
    <reaction evidence="1">
        <text>uroporphyrinogen III + 4 H(+) = coproporphyrinogen III + 4 CO2</text>
        <dbReference type="Rhea" id="RHEA:19865"/>
        <dbReference type="ChEBI" id="CHEBI:15378"/>
        <dbReference type="ChEBI" id="CHEBI:16526"/>
        <dbReference type="ChEBI" id="CHEBI:57308"/>
        <dbReference type="ChEBI" id="CHEBI:57309"/>
        <dbReference type="EC" id="4.1.1.37"/>
    </reaction>
</comment>
<comment type="pathway">
    <text evidence="1">Porphyrin-containing compound metabolism; protoporphyrin-IX biosynthesis; coproporphyrinogen-III from 5-aminolevulinate: step 4/4.</text>
</comment>
<comment type="subunit">
    <text evidence="1">Homodimer.</text>
</comment>
<comment type="subcellular location">
    <subcellularLocation>
        <location evidence="1">Cytoplasm</location>
    </subcellularLocation>
</comment>
<comment type="similarity">
    <text evidence="1">Belongs to the uroporphyrinogen decarboxylase family.</text>
</comment>
<sequence length="346" mass="39965">MKQIINPLKGNNNKVPIWFMRQAGRYLPEYKKVRETTKNFLDFCYDVSKATEVTLQPIKRYGFDAAIIFSDILVLPHALGWEVDFKENIGPILKQFKSQEDFKYLQINPNYKLEKVYEIIKKVKKELPSPISLIGFAGSPWTVMSYMLEGKGKQDFKTSKKFIYENKILAEELLNFITEKTADHLINQAKSGADVLKLFDSWSGVLAEEEFTEFVIEPTKKIILKVKEVFPKTPIIAFPKGAGLLYEKFIKEVPIDVLAVDQMVPLEKMKEWSDKVIVQGNLDPVVLLTNKEIIKEKTYKILQVMKGKNFIFNLGHGILPETPTENVEFLTEYVRLYEEKNSNSTF</sequence>
<protein>
    <recommendedName>
        <fullName evidence="1">Uroporphyrinogen decarboxylase</fullName>
        <shortName evidence="1">UPD</shortName>
        <shortName evidence="1">URO-D</shortName>
        <ecNumber evidence="1">4.1.1.37</ecNumber>
    </recommendedName>
</protein>
<proteinExistence type="inferred from homology"/>
<name>DCUP_RICCN</name>
<keyword id="KW-0963">Cytoplasm</keyword>
<keyword id="KW-0210">Decarboxylase</keyword>
<keyword id="KW-0456">Lyase</keyword>
<keyword id="KW-0627">Porphyrin biosynthesis</keyword>
<dbReference type="EC" id="4.1.1.37" evidence="1"/>
<dbReference type="EMBL" id="AE006914">
    <property type="protein sequence ID" value="AAL03912.1"/>
    <property type="molecule type" value="Genomic_DNA"/>
</dbReference>
<dbReference type="PIR" id="F97871">
    <property type="entry name" value="F97871"/>
</dbReference>
<dbReference type="RefSeq" id="WP_004997025.1">
    <property type="nucleotide sequence ID" value="NC_003103.1"/>
</dbReference>
<dbReference type="SMR" id="Q92FV3"/>
<dbReference type="GeneID" id="95361749"/>
<dbReference type="KEGG" id="rco:RC1374"/>
<dbReference type="HOGENOM" id="CLU_040933_0_0_5"/>
<dbReference type="UniPathway" id="UPA00251">
    <property type="reaction ID" value="UER00321"/>
</dbReference>
<dbReference type="Proteomes" id="UP000000816">
    <property type="component" value="Chromosome"/>
</dbReference>
<dbReference type="GO" id="GO:0005829">
    <property type="term" value="C:cytosol"/>
    <property type="evidence" value="ECO:0007669"/>
    <property type="project" value="TreeGrafter"/>
</dbReference>
<dbReference type="GO" id="GO:0004853">
    <property type="term" value="F:uroporphyrinogen decarboxylase activity"/>
    <property type="evidence" value="ECO:0007669"/>
    <property type="project" value="UniProtKB-UniRule"/>
</dbReference>
<dbReference type="GO" id="GO:0006782">
    <property type="term" value="P:protoporphyrinogen IX biosynthetic process"/>
    <property type="evidence" value="ECO:0007669"/>
    <property type="project" value="UniProtKB-UniRule"/>
</dbReference>
<dbReference type="CDD" id="cd00717">
    <property type="entry name" value="URO-D"/>
    <property type="match status" value="1"/>
</dbReference>
<dbReference type="FunFam" id="3.20.20.210:FF:000007">
    <property type="entry name" value="Uroporphyrinogen decarboxylase"/>
    <property type="match status" value="1"/>
</dbReference>
<dbReference type="Gene3D" id="3.20.20.210">
    <property type="match status" value="1"/>
</dbReference>
<dbReference type="HAMAP" id="MF_00218">
    <property type="entry name" value="URO_D"/>
    <property type="match status" value="1"/>
</dbReference>
<dbReference type="InterPro" id="IPR038071">
    <property type="entry name" value="UROD/MetE-like_sf"/>
</dbReference>
<dbReference type="InterPro" id="IPR006361">
    <property type="entry name" value="Uroporphyrinogen_deCO2ase_HemE"/>
</dbReference>
<dbReference type="InterPro" id="IPR000257">
    <property type="entry name" value="Uroporphyrinogen_deCOase"/>
</dbReference>
<dbReference type="NCBIfam" id="TIGR01464">
    <property type="entry name" value="hemE"/>
    <property type="match status" value="1"/>
</dbReference>
<dbReference type="PANTHER" id="PTHR21091">
    <property type="entry name" value="METHYLTETRAHYDROFOLATE:HOMOCYSTEINE METHYLTRANSFERASE RELATED"/>
    <property type="match status" value="1"/>
</dbReference>
<dbReference type="PANTHER" id="PTHR21091:SF169">
    <property type="entry name" value="UROPORPHYRINOGEN DECARBOXYLASE"/>
    <property type="match status" value="1"/>
</dbReference>
<dbReference type="Pfam" id="PF01208">
    <property type="entry name" value="URO-D"/>
    <property type="match status" value="1"/>
</dbReference>
<dbReference type="SUPFAM" id="SSF51726">
    <property type="entry name" value="UROD/MetE-like"/>
    <property type="match status" value="1"/>
</dbReference>
<dbReference type="PROSITE" id="PS00906">
    <property type="entry name" value="UROD_1"/>
    <property type="match status" value="1"/>
</dbReference>
<dbReference type="PROSITE" id="PS00907">
    <property type="entry name" value="UROD_2"/>
    <property type="match status" value="1"/>
</dbReference>
<accession>Q92FV3</accession>
<gene>
    <name evidence="1" type="primary">hemE</name>
    <name type="ordered locus">RC1374</name>
</gene>
<organism>
    <name type="scientific">Rickettsia conorii (strain ATCC VR-613 / Malish 7)</name>
    <dbReference type="NCBI Taxonomy" id="272944"/>
    <lineage>
        <taxon>Bacteria</taxon>
        <taxon>Pseudomonadati</taxon>
        <taxon>Pseudomonadota</taxon>
        <taxon>Alphaproteobacteria</taxon>
        <taxon>Rickettsiales</taxon>
        <taxon>Rickettsiaceae</taxon>
        <taxon>Rickettsieae</taxon>
        <taxon>Rickettsia</taxon>
        <taxon>spotted fever group</taxon>
    </lineage>
</organism>
<reference key="1">
    <citation type="journal article" date="2001" name="Science">
        <title>Mechanisms of evolution in Rickettsia conorii and R. prowazekii.</title>
        <authorList>
            <person name="Ogata H."/>
            <person name="Audic S."/>
            <person name="Renesto-Audiffren P."/>
            <person name="Fournier P.-E."/>
            <person name="Barbe V."/>
            <person name="Samson D."/>
            <person name="Roux V."/>
            <person name="Cossart P."/>
            <person name="Weissenbach J."/>
            <person name="Claverie J.-M."/>
            <person name="Raoult D."/>
        </authorList>
    </citation>
    <scope>NUCLEOTIDE SEQUENCE [LARGE SCALE GENOMIC DNA]</scope>
    <source>
        <strain>ATCC VR-613 / Malish 7</strain>
    </source>
</reference>
<evidence type="ECO:0000255" key="1">
    <source>
        <dbReference type="HAMAP-Rule" id="MF_00218"/>
    </source>
</evidence>
<feature type="chain" id="PRO_0000187633" description="Uroporphyrinogen decarboxylase">
    <location>
        <begin position="1"/>
        <end position="346"/>
    </location>
</feature>
<feature type="binding site" evidence="1">
    <location>
        <begin position="21"/>
        <end position="25"/>
    </location>
    <ligand>
        <name>substrate</name>
    </ligand>
</feature>
<feature type="binding site" evidence="1">
    <location>
        <position position="40"/>
    </location>
    <ligand>
        <name>substrate</name>
    </ligand>
</feature>
<feature type="binding site" evidence="1">
    <location>
        <position position="71"/>
    </location>
    <ligand>
        <name>substrate</name>
    </ligand>
</feature>
<feature type="binding site" evidence="1">
    <location>
        <position position="146"/>
    </location>
    <ligand>
        <name>substrate</name>
    </ligand>
</feature>
<feature type="binding site" evidence="1">
    <location>
        <position position="201"/>
    </location>
    <ligand>
        <name>substrate</name>
    </ligand>
</feature>
<feature type="binding site" evidence="1">
    <location>
        <position position="316"/>
    </location>
    <ligand>
        <name>substrate</name>
    </ligand>
</feature>
<feature type="site" description="Transition state stabilizer" evidence="1">
    <location>
        <position position="71"/>
    </location>
</feature>